<name>Y411_ENCCU</name>
<evidence type="ECO:0000305" key="1"/>
<feature type="chain" id="PRO_0000223155" description="UPF0329 protein ECU04_0110">
    <location>
        <begin position="1"/>
        <end position="213"/>
    </location>
</feature>
<protein>
    <recommendedName>
        <fullName>UPF0329 protein ECU04_0110</fullName>
    </recommendedName>
</protein>
<comment type="similarity">
    <text evidence="1">Belongs to the UPF0329 family.</text>
</comment>
<proteinExistence type="inferred from homology"/>
<keyword id="KW-1185">Reference proteome</keyword>
<reference key="1">
    <citation type="journal article" date="2001" name="Nature">
        <title>Genome sequence and gene compaction of the eukaryote parasite Encephalitozoon cuniculi.</title>
        <authorList>
            <person name="Katinka M.D."/>
            <person name="Duprat S."/>
            <person name="Cornillot E."/>
            <person name="Metenier G."/>
            <person name="Thomarat F."/>
            <person name="Prensier G."/>
            <person name="Barbe V."/>
            <person name="Peyretaillade E."/>
            <person name="Brottier P."/>
            <person name="Wincker P."/>
            <person name="Delbac F."/>
            <person name="El Alaoui H."/>
            <person name="Peyret P."/>
            <person name="Saurin W."/>
            <person name="Gouy M."/>
            <person name="Weissenbach J."/>
            <person name="Vivares C.P."/>
        </authorList>
    </citation>
    <scope>NUCLEOTIDE SEQUENCE [LARGE SCALE GENOMIC DNA]</scope>
    <source>
        <strain>GB-M1</strain>
    </source>
</reference>
<organism>
    <name type="scientific">Encephalitozoon cuniculi (strain GB-M1)</name>
    <name type="common">Microsporidian parasite</name>
    <dbReference type="NCBI Taxonomy" id="284813"/>
    <lineage>
        <taxon>Eukaryota</taxon>
        <taxon>Fungi</taxon>
        <taxon>Fungi incertae sedis</taxon>
        <taxon>Microsporidia</taxon>
        <taxon>Unikaryonidae</taxon>
        <taxon>Encephalitozoon</taxon>
    </lineage>
</organism>
<accession>Q8SVY5</accession>
<dbReference type="EMBL" id="AL590444">
    <property type="protein sequence ID" value="CAD25198.1"/>
    <property type="molecule type" value="Genomic_DNA"/>
</dbReference>
<dbReference type="RefSeq" id="NP_584694.1">
    <property type="nucleotide sequence ID" value="NM_001041044.1"/>
</dbReference>
<dbReference type="STRING" id="284813.Q8SVY5"/>
<dbReference type="GeneID" id="858842"/>
<dbReference type="KEGG" id="ecu:ECU04_0110"/>
<dbReference type="VEuPathDB" id="MicrosporidiaDB:ECU04_0110"/>
<dbReference type="HOGENOM" id="CLU_090379_0_0_1"/>
<dbReference type="InParanoid" id="Q8SVY5"/>
<dbReference type="OrthoDB" id="10583284at2759"/>
<dbReference type="Proteomes" id="UP000000819">
    <property type="component" value="Chromosome IV"/>
</dbReference>
<dbReference type="InterPro" id="IPR011667">
    <property type="entry name" value="UPF0329"/>
</dbReference>
<dbReference type="Pfam" id="PF07753">
    <property type="entry name" value="DUF1609"/>
    <property type="match status" value="1"/>
</dbReference>
<gene>
    <name type="ordered locus">ECU04_0110</name>
</gene>
<sequence>MDSANGCGILKKERRSEEHHYKVHRRVLRWMKSAEKIKRELDEGYEKKWRNRSIEEIKEQKKVHDIVEVMKLLRDKEECDRFFVRTGKYMKGGSERWKMVANGILEEGGEKKVRKVEVGLFKGERGGSVVYHLMFRPTETERTGRVGGSSFGKYDDVDEIKKEESSDMSGFRYPPGVRCEMTSNGNEFRIEYRNPKNTSEVLRTLTILRIPEI</sequence>